<keyword id="KW-0963">Cytoplasm</keyword>
<keyword id="KW-0275">Fatty acid biosynthesis</keyword>
<keyword id="KW-0276">Fatty acid metabolism</keyword>
<keyword id="KW-0444">Lipid biosynthesis</keyword>
<keyword id="KW-0443">Lipid metabolism</keyword>
<keyword id="KW-0596">Phosphopantetheine</keyword>
<keyword id="KW-0597">Phosphoprotein</keyword>
<keyword id="KW-1185">Reference proteome</keyword>
<gene>
    <name evidence="1" type="primary">acpP</name>
    <name type="ordered locus">ESA_02251</name>
</gene>
<evidence type="ECO:0000255" key="1">
    <source>
        <dbReference type="HAMAP-Rule" id="MF_01217"/>
    </source>
</evidence>
<evidence type="ECO:0000255" key="2">
    <source>
        <dbReference type="PROSITE-ProRule" id="PRU00258"/>
    </source>
</evidence>
<protein>
    <recommendedName>
        <fullName evidence="1">Acyl carrier protein</fullName>
        <shortName evidence="1">ACP</shortName>
    </recommendedName>
</protein>
<sequence length="78" mass="8640">MSTIEERVKKIIGEQLGVKQEEVTNNASFVEDLGADSLDTVELVMALEEEFDTEIPDEEAEKITTVQAAIDYINGHQA</sequence>
<name>ACP_CROS8</name>
<accession>A7MFR6</accession>
<dbReference type="EMBL" id="CP000783">
    <property type="protein sequence ID" value="ABU77500.1"/>
    <property type="molecule type" value="Genomic_DNA"/>
</dbReference>
<dbReference type="RefSeq" id="WP_000103754.1">
    <property type="nucleotide sequence ID" value="NC_009778.1"/>
</dbReference>
<dbReference type="BMRB" id="A7MFR6"/>
<dbReference type="SMR" id="A7MFR6"/>
<dbReference type="GeneID" id="98387866"/>
<dbReference type="KEGG" id="esa:ESA_02251"/>
<dbReference type="HOGENOM" id="CLU_108696_5_1_6"/>
<dbReference type="UniPathway" id="UPA00094"/>
<dbReference type="Proteomes" id="UP000000260">
    <property type="component" value="Chromosome"/>
</dbReference>
<dbReference type="GO" id="GO:0005829">
    <property type="term" value="C:cytosol"/>
    <property type="evidence" value="ECO:0007669"/>
    <property type="project" value="TreeGrafter"/>
</dbReference>
<dbReference type="GO" id="GO:0016020">
    <property type="term" value="C:membrane"/>
    <property type="evidence" value="ECO:0007669"/>
    <property type="project" value="GOC"/>
</dbReference>
<dbReference type="GO" id="GO:0000035">
    <property type="term" value="F:acyl binding"/>
    <property type="evidence" value="ECO:0007669"/>
    <property type="project" value="TreeGrafter"/>
</dbReference>
<dbReference type="GO" id="GO:0000036">
    <property type="term" value="F:acyl carrier activity"/>
    <property type="evidence" value="ECO:0007669"/>
    <property type="project" value="UniProtKB-UniRule"/>
</dbReference>
<dbReference type="GO" id="GO:0009245">
    <property type="term" value="P:lipid A biosynthetic process"/>
    <property type="evidence" value="ECO:0007669"/>
    <property type="project" value="TreeGrafter"/>
</dbReference>
<dbReference type="FunFam" id="1.10.1200.10:FF:000001">
    <property type="entry name" value="Acyl carrier protein"/>
    <property type="match status" value="1"/>
</dbReference>
<dbReference type="Gene3D" id="1.10.1200.10">
    <property type="entry name" value="ACP-like"/>
    <property type="match status" value="1"/>
</dbReference>
<dbReference type="HAMAP" id="MF_01217">
    <property type="entry name" value="Acyl_carrier"/>
    <property type="match status" value="1"/>
</dbReference>
<dbReference type="InterPro" id="IPR003231">
    <property type="entry name" value="ACP"/>
</dbReference>
<dbReference type="InterPro" id="IPR036736">
    <property type="entry name" value="ACP-like_sf"/>
</dbReference>
<dbReference type="InterPro" id="IPR009081">
    <property type="entry name" value="PP-bd_ACP"/>
</dbReference>
<dbReference type="InterPro" id="IPR006162">
    <property type="entry name" value="Ppantetheine_attach_site"/>
</dbReference>
<dbReference type="NCBIfam" id="TIGR00517">
    <property type="entry name" value="acyl_carrier"/>
    <property type="match status" value="1"/>
</dbReference>
<dbReference type="NCBIfam" id="NF002148">
    <property type="entry name" value="PRK00982.1-2"/>
    <property type="match status" value="1"/>
</dbReference>
<dbReference type="NCBIfam" id="NF002149">
    <property type="entry name" value="PRK00982.1-3"/>
    <property type="match status" value="1"/>
</dbReference>
<dbReference type="NCBIfam" id="NF002150">
    <property type="entry name" value="PRK00982.1-4"/>
    <property type="match status" value="1"/>
</dbReference>
<dbReference type="NCBIfam" id="NF002151">
    <property type="entry name" value="PRK00982.1-5"/>
    <property type="match status" value="1"/>
</dbReference>
<dbReference type="PANTHER" id="PTHR20863">
    <property type="entry name" value="ACYL CARRIER PROTEIN"/>
    <property type="match status" value="1"/>
</dbReference>
<dbReference type="PANTHER" id="PTHR20863:SF76">
    <property type="entry name" value="CARRIER DOMAIN-CONTAINING PROTEIN"/>
    <property type="match status" value="1"/>
</dbReference>
<dbReference type="Pfam" id="PF00550">
    <property type="entry name" value="PP-binding"/>
    <property type="match status" value="1"/>
</dbReference>
<dbReference type="SUPFAM" id="SSF47336">
    <property type="entry name" value="ACP-like"/>
    <property type="match status" value="1"/>
</dbReference>
<dbReference type="PROSITE" id="PS50075">
    <property type="entry name" value="CARRIER"/>
    <property type="match status" value="1"/>
</dbReference>
<dbReference type="PROSITE" id="PS00012">
    <property type="entry name" value="PHOSPHOPANTETHEINE"/>
    <property type="match status" value="1"/>
</dbReference>
<comment type="function">
    <text evidence="1">Carrier of the growing fatty acid chain in fatty acid biosynthesis.</text>
</comment>
<comment type="pathway">
    <text evidence="1">Lipid metabolism; fatty acid biosynthesis.</text>
</comment>
<comment type="subcellular location">
    <subcellularLocation>
        <location evidence="1">Cytoplasm</location>
    </subcellularLocation>
</comment>
<comment type="PTM">
    <text evidence="1">4'-phosphopantetheine is transferred from CoA to a specific serine of apo-ACP by AcpS. This modification is essential for activity because fatty acids are bound in thioester linkage to the sulfhydryl of the prosthetic group.</text>
</comment>
<comment type="similarity">
    <text evidence="1">Belongs to the acyl carrier protein (ACP) family.</text>
</comment>
<reference key="1">
    <citation type="journal article" date="2010" name="PLoS ONE">
        <title>Genome sequence of Cronobacter sakazakii BAA-894 and comparative genomic hybridization analysis with other Cronobacter species.</title>
        <authorList>
            <person name="Kucerova E."/>
            <person name="Clifton S.W."/>
            <person name="Xia X.Q."/>
            <person name="Long F."/>
            <person name="Porwollik S."/>
            <person name="Fulton L."/>
            <person name="Fronick C."/>
            <person name="Minx P."/>
            <person name="Kyung K."/>
            <person name="Warren W."/>
            <person name="Fulton R."/>
            <person name="Feng D."/>
            <person name="Wollam A."/>
            <person name="Shah N."/>
            <person name="Bhonagiri V."/>
            <person name="Nash W.E."/>
            <person name="Hallsworth-Pepin K."/>
            <person name="Wilson R.K."/>
            <person name="McClelland M."/>
            <person name="Forsythe S.J."/>
        </authorList>
    </citation>
    <scope>NUCLEOTIDE SEQUENCE [LARGE SCALE GENOMIC DNA]</scope>
    <source>
        <strain>ATCC BAA-894</strain>
    </source>
</reference>
<organism>
    <name type="scientific">Cronobacter sakazakii (strain ATCC BAA-894)</name>
    <name type="common">Enterobacter sakazakii</name>
    <dbReference type="NCBI Taxonomy" id="290339"/>
    <lineage>
        <taxon>Bacteria</taxon>
        <taxon>Pseudomonadati</taxon>
        <taxon>Pseudomonadota</taxon>
        <taxon>Gammaproteobacteria</taxon>
        <taxon>Enterobacterales</taxon>
        <taxon>Enterobacteriaceae</taxon>
        <taxon>Cronobacter</taxon>
    </lineage>
</organism>
<feature type="chain" id="PRO_1000066609" description="Acyl carrier protein">
    <location>
        <begin position="1"/>
        <end position="78"/>
    </location>
</feature>
<feature type="domain" description="Carrier" evidence="2">
    <location>
        <begin position="2"/>
        <end position="77"/>
    </location>
</feature>
<feature type="modified residue" description="O-(pantetheine 4'-phosphoryl)serine" evidence="2">
    <location>
        <position position="37"/>
    </location>
</feature>
<proteinExistence type="inferred from homology"/>